<proteinExistence type="inferred from homology"/>
<comment type="function">
    <text evidence="1">Sulfur carrier protein involved in sulfur trafficking in the cell. Part of a sulfur-relay system required for 2-thiolation during synthesis of 2-thiouridine of the modified wobble base 5-methylaminomethyl-2-thiouridine (mnm(5)s(2)U) in tRNA. Interacts with IscS and stimulates its cysteine desulfurase activity. Accepts an activated sulfur from IscS, which is then transferred to TusD, and thus determines the direction of sulfur flow from IscS to 2-thiouridine formation. Also appears to be involved in sulfur transfer for the biosynthesis of molybdopterin.</text>
</comment>
<comment type="pathway">
    <text evidence="1">tRNA modification.</text>
</comment>
<comment type="subunit">
    <text evidence="1">Interacts with IscS.</text>
</comment>
<comment type="subcellular location">
    <subcellularLocation>
        <location evidence="1">Cytoplasm</location>
    </subcellularLocation>
</comment>
<comment type="similarity">
    <text evidence="1">Belongs to the sulfur carrier protein TusA family.</text>
</comment>
<keyword id="KW-0963">Cytoplasm</keyword>
<keyword id="KW-0819">tRNA processing</keyword>
<sequence length="84" mass="9346">MPDAFAAADQTLDARGLRCPEPVMMVRKAVRHMADGQTLLIISDDPATTRDIPGFCQFMEHTLLAQATEQLPYRYLLRKGRAAA</sequence>
<feature type="chain" id="PRO_0000234127" description="Sulfur carrier protein TusA">
    <location>
        <begin position="1"/>
        <end position="84"/>
    </location>
</feature>
<feature type="active site" description="Cysteine persulfide intermediate" evidence="1">
    <location>
        <position position="19"/>
    </location>
</feature>
<reference key="1">
    <citation type="journal article" date="2006" name="Genome Res.">
        <title>Massive genome erosion and functional adaptations provide insights into the symbiotic lifestyle of Sodalis glossinidius in the tsetse host.</title>
        <authorList>
            <person name="Toh H."/>
            <person name="Weiss B.L."/>
            <person name="Perkin S.A.H."/>
            <person name="Yamashita A."/>
            <person name="Oshima K."/>
            <person name="Hattori M."/>
            <person name="Aksoy S."/>
        </authorList>
    </citation>
    <scope>NUCLEOTIDE SEQUENCE [LARGE SCALE GENOMIC DNA]</scope>
    <source>
        <strain>morsitans</strain>
    </source>
</reference>
<gene>
    <name evidence="1" type="primary">tusA</name>
    <name type="ordered locus">SG0079</name>
</gene>
<protein>
    <recommendedName>
        <fullName evidence="1">Sulfur carrier protein TusA</fullName>
    </recommendedName>
    <alternativeName>
        <fullName evidence="1">Sulfur mediator TusA</fullName>
    </alternativeName>
    <alternativeName>
        <fullName evidence="1">Sulfur transfer protein TusA</fullName>
    </alternativeName>
    <alternativeName>
        <fullName evidence="1">tRNA 2-thiouridine synthesizing protein A</fullName>
    </alternativeName>
</protein>
<organism>
    <name type="scientific">Sodalis glossinidius (strain morsitans)</name>
    <dbReference type="NCBI Taxonomy" id="343509"/>
    <lineage>
        <taxon>Bacteria</taxon>
        <taxon>Pseudomonadati</taxon>
        <taxon>Pseudomonadota</taxon>
        <taxon>Gammaproteobacteria</taxon>
        <taxon>Enterobacterales</taxon>
        <taxon>Bruguierivoracaceae</taxon>
        <taxon>Sodalis</taxon>
    </lineage>
</organism>
<name>TUSA_SODGM</name>
<accession>Q2NWX1</accession>
<dbReference type="EMBL" id="AP008232">
    <property type="protein sequence ID" value="BAE73354.1"/>
    <property type="molecule type" value="Genomic_DNA"/>
</dbReference>
<dbReference type="RefSeq" id="WP_011409944.1">
    <property type="nucleotide sequence ID" value="NC_007712.1"/>
</dbReference>
<dbReference type="SMR" id="Q2NWX1"/>
<dbReference type="STRING" id="343509.SG0079"/>
<dbReference type="KEGG" id="sgl:SG0079"/>
<dbReference type="eggNOG" id="COG0425">
    <property type="taxonomic scope" value="Bacteria"/>
</dbReference>
<dbReference type="HOGENOM" id="CLU_165255_5_0_6"/>
<dbReference type="OrthoDB" id="9797352at2"/>
<dbReference type="BioCyc" id="SGLO343509:SGP1_RS00625-MONOMER"/>
<dbReference type="Proteomes" id="UP000001932">
    <property type="component" value="Chromosome"/>
</dbReference>
<dbReference type="GO" id="GO:0005737">
    <property type="term" value="C:cytoplasm"/>
    <property type="evidence" value="ECO:0007669"/>
    <property type="project" value="UniProtKB-SubCell"/>
</dbReference>
<dbReference type="GO" id="GO:0097163">
    <property type="term" value="F:sulfur carrier activity"/>
    <property type="evidence" value="ECO:0007669"/>
    <property type="project" value="UniProtKB-UniRule"/>
</dbReference>
<dbReference type="GO" id="GO:0002143">
    <property type="term" value="P:tRNA wobble position uridine thiolation"/>
    <property type="evidence" value="ECO:0007669"/>
    <property type="project" value="InterPro"/>
</dbReference>
<dbReference type="CDD" id="cd03423">
    <property type="entry name" value="SirA"/>
    <property type="match status" value="1"/>
</dbReference>
<dbReference type="Gene3D" id="3.30.110.40">
    <property type="entry name" value="TusA-like domain"/>
    <property type="match status" value="1"/>
</dbReference>
<dbReference type="HAMAP" id="MF_00413">
    <property type="entry name" value="Thiourid_synth_A"/>
    <property type="match status" value="1"/>
</dbReference>
<dbReference type="InterPro" id="IPR022931">
    <property type="entry name" value="Sulphur_carrier_TusA"/>
</dbReference>
<dbReference type="InterPro" id="IPR001455">
    <property type="entry name" value="TusA-like"/>
</dbReference>
<dbReference type="InterPro" id="IPR036868">
    <property type="entry name" value="TusA-like_sf"/>
</dbReference>
<dbReference type="NCBIfam" id="NF001423">
    <property type="entry name" value="PRK00299.1"/>
    <property type="match status" value="1"/>
</dbReference>
<dbReference type="PANTHER" id="PTHR33279:SF2">
    <property type="entry name" value="SULFUR CARRIER PROTEIN TUSA"/>
    <property type="match status" value="1"/>
</dbReference>
<dbReference type="PANTHER" id="PTHR33279">
    <property type="entry name" value="SULFUR CARRIER PROTEIN YEDF-RELATED"/>
    <property type="match status" value="1"/>
</dbReference>
<dbReference type="Pfam" id="PF01206">
    <property type="entry name" value="TusA"/>
    <property type="match status" value="1"/>
</dbReference>
<dbReference type="SUPFAM" id="SSF64307">
    <property type="entry name" value="SirA-like"/>
    <property type="match status" value="1"/>
</dbReference>
<dbReference type="PROSITE" id="PS01148">
    <property type="entry name" value="UPF0033"/>
    <property type="match status" value="1"/>
</dbReference>
<evidence type="ECO:0000255" key="1">
    <source>
        <dbReference type="HAMAP-Rule" id="MF_00413"/>
    </source>
</evidence>